<reference key="1">
    <citation type="submission" date="2008-06" db="EMBL/GenBank/DDBJ databases">
        <title>Complete sequence of Chlorobaculum parvum NCIB 8327.</title>
        <authorList>
            <consortium name="US DOE Joint Genome Institute"/>
            <person name="Lucas S."/>
            <person name="Copeland A."/>
            <person name="Lapidus A."/>
            <person name="Glavina del Rio T."/>
            <person name="Dalin E."/>
            <person name="Tice H."/>
            <person name="Bruce D."/>
            <person name="Goodwin L."/>
            <person name="Pitluck S."/>
            <person name="Schmutz J."/>
            <person name="Larimer F."/>
            <person name="Land M."/>
            <person name="Hauser L."/>
            <person name="Kyrpides N."/>
            <person name="Mikhailova N."/>
            <person name="Zhao F."/>
            <person name="Li T."/>
            <person name="Liu Z."/>
            <person name="Overmann J."/>
            <person name="Bryant D.A."/>
            <person name="Richardson P."/>
        </authorList>
    </citation>
    <scope>NUCLEOTIDE SEQUENCE [LARGE SCALE GENOMIC DNA]</scope>
    <source>
        <strain>DSM 263 / NCIMB 8327</strain>
    </source>
</reference>
<proteinExistence type="inferred from homology"/>
<comment type="function">
    <text evidence="1">Binds to the 23S rRNA.</text>
</comment>
<comment type="similarity">
    <text evidence="1">Belongs to the bacterial ribosomal protein bL9 family.</text>
</comment>
<accession>B3QRL8</accession>
<feature type="chain" id="PRO_1000126885" description="Large ribosomal subunit protein bL9">
    <location>
        <begin position="1"/>
        <end position="162"/>
    </location>
</feature>
<organism>
    <name type="scientific">Chlorobaculum parvum (strain DSM 263 / NCIMB 8327)</name>
    <name type="common">Chlorobium vibrioforme subsp. thiosulfatophilum</name>
    <dbReference type="NCBI Taxonomy" id="517417"/>
    <lineage>
        <taxon>Bacteria</taxon>
        <taxon>Pseudomonadati</taxon>
        <taxon>Chlorobiota</taxon>
        <taxon>Chlorobiia</taxon>
        <taxon>Chlorobiales</taxon>
        <taxon>Chlorobiaceae</taxon>
        <taxon>Chlorobaculum</taxon>
    </lineage>
</organism>
<sequence length="162" mass="17410">MKIILRKDVATLGDAGEVVTVKNGYANNYLIPQGFAIRATEGTLKALETEKKQQAHKIEQRRKEARELSAKIEQMTLNISTKAGESGKLFGTVTSGDIADALKAQGVEIDRRKIQLEAPIKALGKYEAVAKIYMDIAAKLNIVVGAEGAEAVETAEAPEAGE</sequence>
<dbReference type="EMBL" id="CP001099">
    <property type="protein sequence ID" value="ACF10540.1"/>
    <property type="molecule type" value="Genomic_DNA"/>
</dbReference>
<dbReference type="RefSeq" id="WP_012501375.1">
    <property type="nucleotide sequence ID" value="NC_011027.1"/>
</dbReference>
<dbReference type="SMR" id="B3QRL8"/>
<dbReference type="STRING" id="517417.Cpar_0112"/>
<dbReference type="KEGG" id="cpc:Cpar_0112"/>
<dbReference type="eggNOG" id="COG0359">
    <property type="taxonomic scope" value="Bacteria"/>
</dbReference>
<dbReference type="HOGENOM" id="CLU_078938_3_0_10"/>
<dbReference type="OrthoDB" id="9788336at2"/>
<dbReference type="Proteomes" id="UP000008811">
    <property type="component" value="Chromosome"/>
</dbReference>
<dbReference type="GO" id="GO:1990904">
    <property type="term" value="C:ribonucleoprotein complex"/>
    <property type="evidence" value="ECO:0007669"/>
    <property type="project" value="UniProtKB-KW"/>
</dbReference>
<dbReference type="GO" id="GO:0005840">
    <property type="term" value="C:ribosome"/>
    <property type="evidence" value="ECO:0007669"/>
    <property type="project" value="UniProtKB-KW"/>
</dbReference>
<dbReference type="GO" id="GO:0019843">
    <property type="term" value="F:rRNA binding"/>
    <property type="evidence" value="ECO:0007669"/>
    <property type="project" value="UniProtKB-UniRule"/>
</dbReference>
<dbReference type="GO" id="GO:0003735">
    <property type="term" value="F:structural constituent of ribosome"/>
    <property type="evidence" value="ECO:0007669"/>
    <property type="project" value="InterPro"/>
</dbReference>
<dbReference type="GO" id="GO:0006412">
    <property type="term" value="P:translation"/>
    <property type="evidence" value="ECO:0007669"/>
    <property type="project" value="UniProtKB-UniRule"/>
</dbReference>
<dbReference type="FunFam" id="3.40.5.10:FF:000003">
    <property type="entry name" value="50S ribosomal protein L9"/>
    <property type="match status" value="1"/>
</dbReference>
<dbReference type="Gene3D" id="3.10.430.100">
    <property type="entry name" value="Ribosomal protein L9, C-terminal domain"/>
    <property type="match status" value="1"/>
</dbReference>
<dbReference type="Gene3D" id="3.40.5.10">
    <property type="entry name" value="Ribosomal protein L9, N-terminal domain"/>
    <property type="match status" value="1"/>
</dbReference>
<dbReference type="HAMAP" id="MF_00503">
    <property type="entry name" value="Ribosomal_bL9"/>
    <property type="match status" value="1"/>
</dbReference>
<dbReference type="InterPro" id="IPR000244">
    <property type="entry name" value="Ribosomal_bL9"/>
</dbReference>
<dbReference type="InterPro" id="IPR009027">
    <property type="entry name" value="Ribosomal_bL9/RNase_H1_N"/>
</dbReference>
<dbReference type="InterPro" id="IPR020594">
    <property type="entry name" value="Ribosomal_bL9_bac/chp"/>
</dbReference>
<dbReference type="InterPro" id="IPR020069">
    <property type="entry name" value="Ribosomal_bL9_C"/>
</dbReference>
<dbReference type="InterPro" id="IPR036791">
    <property type="entry name" value="Ribosomal_bL9_C_sf"/>
</dbReference>
<dbReference type="InterPro" id="IPR020070">
    <property type="entry name" value="Ribosomal_bL9_N"/>
</dbReference>
<dbReference type="InterPro" id="IPR036935">
    <property type="entry name" value="Ribosomal_bL9_N_sf"/>
</dbReference>
<dbReference type="NCBIfam" id="TIGR00158">
    <property type="entry name" value="L9"/>
    <property type="match status" value="1"/>
</dbReference>
<dbReference type="PANTHER" id="PTHR21368">
    <property type="entry name" value="50S RIBOSOMAL PROTEIN L9"/>
    <property type="match status" value="1"/>
</dbReference>
<dbReference type="Pfam" id="PF03948">
    <property type="entry name" value="Ribosomal_L9_C"/>
    <property type="match status" value="1"/>
</dbReference>
<dbReference type="Pfam" id="PF01281">
    <property type="entry name" value="Ribosomal_L9_N"/>
    <property type="match status" value="1"/>
</dbReference>
<dbReference type="SUPFAM" id="SSF55658">
    <property type="entry name" value="L9 N-domain-like"/>
    <property type="match status" value="1"/>
</dbReference>
<dbReference type="SUPFAM" id="SSF55653">
    <property type="entry name" value="Ribosomal protein L9 C-domain"/>
    <property type="match status" value="1"/>
</dbReference>
<dbReference type="PROSITE" id="PS00651">
    <property type="entry name" value="RIBOSOMAL_L9"/>
    <property type="match status" value="1"/>
</dbReference>
<evidence type="ECO:0000255" key="1">
    <source>
        <dbReference type="HAMAP-Rule" id="MF_00503"/>
    </source>
</evidence>
<evidence type="ECO:0000305" key="2"/>
<protein>
    <recommendedName>
        <fullName evidence="1">Large ribosomal subunit protein bL9</fullName>
    </recommendedName>
    <alternativeName>
        <fullName evidence="2">50S ribosomal protein L9</fullName>
    </alternativeName>
</protein>
<name>RL9_CHLP8</name>
<keyword id="KW-0687">Ribonucleoprotein</keyword>
<keyword id="KW-0689">Ribosomal protein</keyword>
<keyword id="KW-0694">RNA-binding</keyword>
<keyword id="KW-0699">rRNA-binding</keyword>
<gene>
    <name evidence="1" type="primary">rplI</name>
    <name type="ordered locus">Cpar_0112</name>
</gene>